<proteinExistence type="evidence at transcript level"/>
<comment type="function">
    <text evidence="2">Acts in a planar cell polarity (PCP) complex; polarization along the apical/basal axis of epithelial cells. Regulates the polarized assembly of fibronectrin on the surface of the mesoderm during gastrulation. Essential for gastrulation cell movements, cooperating with dvl2/dsh to activate jnk. Acts together with tes to control axial elongation (By similarity).</text>
</comment>
<comment type="subunit">
    <text evidence="2">Interacts with dvl2/dsh and mapk8/jnk1.</text>
</comment>
<comment type="subcellular location">
    <subcellularLocation>
        <location evidence="1">Cell membrane</location>
        <topology evidence="1">Peripheral membrane protein</topology>
        <orientation evidence="1">Cytoplasmic side</orientation>
    </subcellularLocation>
</comment>
<comment type="similarity">
    <text evidence="6">Belongs to the prickle / espinas / testin family.</text>
</comment>
<accession>Q28FG2</accession>
<dbReference type="EMBL" id="CR761986">
    <property type="protein sequence ID" value="CAJ81466.1"/>
    <property type="molecule type" value="mRNA"/>
</dbReference>
<dbReference type="RefSeq" id="NP_001016939.1">
    <property type="nucleotide sequence ID" value="NM_001016939.1"/>
</dbReference>
<dbReference type="SMR" id="Q28FG2"/>
<dbReference type="FunCoup" id="Q28FG2">
    <property type="interactions" value="1328"/>
</dbReference>
<dbReference type="STRING" id="8364.ENSXETP00000021715"/>
<dbReference type="PaxDb" id="8364-ENSXETP00000014840"/>
<dbReference type="GeneID" id="549693"/>
<dbReference type="KEGG" id="xtr:549693"/>
<dbReference type="AGR" id="Xenbase:XB-GENE-486941"/>
<dbReference type="CTD" id="144165"/>
<dbReference type="Xenbase" id="XB-GENE-486941">
    <property type="gene designation" value="prickle1"/>
</dbReference>
<dbReference type="eggNOG" id="KOG1704">
    <property type="taxonomic scope" value="Eukaryota"/>
</dbReference>
<dbReference type="InParanoid" id="Q28FG2"/>
<dbReference type="OrthoDB" id="10069167at2759"/>
<dbReference type="Reactome" id="R-XTR-4608870">
    <property type="pathway name" value="Asymmetric localization of PCP proteins"/>
</dbReference>
<dbReference type="Proteomes" id="UP000008143">
    <property type="component" value="Chromosome 3"/>
</dbReference>
<dbReference type="GO" id="GO:0005886">
    <property type="term" value="C:plasma membrane"/>
    <property type="evidence" value="ECO:0007669"/>
    <property type="project" value="UniProtKB-SubCell"/>
</dbReference>
<dbReference type="GO" id="GO:0008270">
    <property type="term" value="F:zinc ion binding"/>
    <property type="evidence" value="ECO:0007669"/>
    <property type="project" value="InterPro"/>
</dbReference>
<dbReference type="GO" id="GO:0009948">
    <property type="term" value="P:anterior/posterior axis specification"/>
    <property type="evidence" value="ECO:0000250"/>
    <property type="project" value="UniProtKB"/>
</dbReference>
<dbReference type="GO" id="GO:0060027">
    <property type="term" value="P:convergent extension involved in gastrulation"/>
    <property type="evidence" value="ECO:0000250"/>
    <property type="project" value="UniProtKB"/>
</dbReference>
<dbReference type="GO" id="GO:0001736">
    <property type="term" value="P:establishment of planar polarity"/>
    <property type="evidence" value="ECO:0000250"/>
    <property type="project" value="UniProtKB"/>
</dbReference>
<dbReference type="CDD" id="cd09415">
    <property type="entry name" value="LIM1_Prickle"/>
    <property type="match status" value="1"/>
</dbReference>
<dbReference type="CDD" id="cd09418">
    <property type="entry name" value="LIM2_Prickle"/>
    <property type="match status" value="1"/>
</dbReference>
<dbReference type="CDD" id="cd09420">
    <property type="entry name" value="LIM3_Prickle"/>
    <property type="match status" value="1"/>
</dbReference>
<dbReference type="CDD" id="cd09827">
    <property type="entry name" value="PET_Prickle"/>
    <property type="match status" value="1"/>
</dbReference>
<dbReference type="FunFam" id="2.10.110.10:FF:000022">
    <property type="entry name" value="prickle-like protein 2 isoform X1"/>
    <property type="match status" value="1"/>
</dbReference>
<dbReference type="FunFam" id="2.10.110.10:FF:000035">
    <property type="entry name" value="prickle-like protein 2 isoform X1"/>
    <property type="match status" value="1"/>
</dbReference>
<dbReference type="FunFam" id="2.10.110.10:FF:000005">
    <property type="entry name" value="Testin isoform 1"/>
    <property type="match status" value="1"/>
</dbReference>
<dbReference type="Gene3D" id="2.10.110.10">
    <property type="entry name" value="Cysteine Rich Protein"/>
    <property type="match status" value="3"/>
</dbReference>
<dbReference type="InterPro" id="IPR033725">
    <property type="entry name" value="LIM1_prickle"/>
</dbReference>
<dbReference type="InterPro" id="IPR033726">
    <property type="entry name" value="LIM2_prickle"/>
</dbReference>
<dbReference type="InterPro" id="IPR033727">
    <property type="entry name" value="LIM3_prickle"/>
</dbReference>
<dbReference type="InterPro" id="IPR010442">
    <property type="entry name" value="PET_domain"/>
</dbReference>
<dbReference type="InterPro" id="IPR033723">
    <property type="entry name" value="PET_prickle"/>
</dbReference>
<dbReference type="InterPro" id="IPR047120">
    <property type="entry name" value="Pk/Esn/Tes"/>
</dbReference>
<dbReference type="InterPro" id="IPR001781">
    <property type="entry name" value="Znf_LIM"/>
</dbReference>
<dbReference type="PANTHER" id="PTHR24211">
    <property type="entry name" value="LIM DOMAIN-CONTAINING PROTEIN"/>
    <property type="match status" value="1"/>
</dbReference>
<dbReference type="PANTHER" id="PTHR24211:SF15">
    <property type="entry name" value="PRICKLE-LIKE PROTEIN 1"/>
    <property type="match status" value="1"/>
</dbReference>
<dbReference type="Pfam" id="PF00412">
    <property type="entry name" value="LIM"/>
    <property type="match status" value="3"/>
</dbReference>
<dbReference type="Pfam" id="PF06297">
    <property type="entry name" value="PET"/>
    <property type="match status" value="1"/>
</dbReference>
<dbReference type="SMART" id="SM00132">
    <property type="entry name" value="LIM"/>
    <property type="match status" value="3"/>
</dbReference>
<dbReference type="SUPFAM" id="SSF57716">
    <property type="entry name" value="Glucocorticoid receptor-like (DNA-binding domain)"/>
    <property type="match status" value="2"/>
</dbReference>
<dbReference type="PROSITE" id="PS00478">
    <property type="entry name" value="LIM_DOMAIN_1"/>
    <property type="match status" value="2"/>
</dbReference>
<dbReference type="PROSITE" id="PS50023">
    <property type="entry name" value="LIM_DOMAIN_2"/>
    <property type="match status" value="3"/>
</dbReference>
<dbReference type="PROSITE" id="PS51303">
    <property type="entry name" value="PET"/>
    <property type="match status" value="1"/>
</dbReference>
<feature type="chain" id="PRO_0000288831" description="Prickle-like protein 1">
    <location>
        <begin position="1"/>
        <end position="830"/>
    </location>
</feature>
<feature type="propeptide" id="PRO_0000396717" description="Removed in mature form" evidence="1">
    <location>
        <begin position="831"/>
        <end position="833"/>
    </location>
</feature>
<feature type="domain" description="PET" evidence="4">
    <location>
        <begin position="14"/>
        <end position="122"/>
    </location>
</feature>
<feature type="domain" description="LIM zinc-binding 1" evidence="3">
    <location>
        <begin position="124"/>
        <end position="188"/>
    </location>
</feature>
<feature type="domain" description="LIM zinc-binding 2" evidence="3">
    <location>
        <begin position="189"/>
        <end position="249"/>
    </location>
</feature>
<feature type="domain" description="LIM zinc-binding 3" evidence="3">
    <location>
        <begin position="250"/>
        <end position="313"/>
    </location>
</feature>
<feature type="region of interest" description="Disordered" evidence="5">
    <location>
        <begin position="1"/>
        <end position="22"/>
    </location>
</feature>
<feature type="region of interest" description="Disordered" evidence="5">
    <location>
        <begin position="312"/>
        <end position="346"/>
    </location>
</feature>
<feature type="region of interest" description="Disordered" evidence="5">
    <location>
        <begin position="432"/>
        <end position="456"/>
    </location>
</feature>
<feature type="region of interest" description="Disordered" evidence="5">
    <location>
        <begin position="603"/>
        <end position="702"/>
    </location>
</feature>
<feature type="region of interest" description="Disordered" evidence="5">
    <location>
        <begin position="767"/>
        <end position="786"/>
    </location>
</feature>
<feature type="region of interest" description="Disordered" evidence="5">
    <location>
        <begin position="805"/>
        <end position="833"/>
    </location>
</feature>
<feature type="compositionally biased region" description="Basic and acidic residues" evidence="5">
    <location>
        <begin position="432"/>
        <end position="453"/>
    </location>
</feature>
<feature type="compositionally biased region" description="Basic and acidic residues" evidence="5">
    <location>
        <begin position="603"/>
        <end position="614"/>
    </location>
</feature>
<feature type="compositionally biased region" description="Basic residues" evidence="5">
    <location>
        <begin position="669"/>
        <end position="680"/>
    </location>
</feature>
<feature type="compositionally biased region" description="Basic residues" evidence="5">
    <location>
        <begin position="817"/>
        <end position="833"/>
    </location>
</feature>
<feature type="modified residue" description="Cysteine methyl ester" evidence="1">
    <location>
        <position position="830"/>
    </location>
</feature>
<feature type="lipid moiety-binding region" description="S-farnesyl cysteine" evidence="1">
    <location>
        <position position="830"/>
    </location>
</feature>
<gene>
    <name evidence="7" type="primary">prickle1</name>
    <name evidence="2" type="synonym">pk</name>
    <name type="ORF">TEgg011j18.1</name>
</gene>
<name>PRIC1_XENTR</name>
<organism>
    <name type="scientific">Xenopus tropicalis</name>
    <name type="common">Western clawed frog</name>
    <name type="synonym">Silurana tropicalis</name>
    <dbReference type="NCBI Taxonomy" id="8364"/>
    <lineage>
        <taxon>Eukaryota</taxon>
        <taxon>Metazoa</taxon>
        <taxon>Chordata</taxon>
        <taxon>Craniata</taxon>
        <taxon>Vertebrata</taxon>
        <taxon>Euteleostomi</taxon>
        <taxon>Amphibia</taxon>
        <taxon>Batrachia</taxon>
        <taxon>Anura</taxon>
        <taxon>Pipoidea</taxon>
        <taxon>Pipidae</taxon>
        <taxon>Xenopodinae</taxon>
        <taxon>Xenopus</taxon>
        <taxon>Silurana</taxon>
    </lineage>
</organism>
<sequence>MPLEMDQKISKHTFGCQRSSTSDDDSGCAMEEYTWVPPGLRPEQVQLYFACLPEEKVPYVNSVGEKCRIKQLLYQLPPHDNEVRYCQSLSEEEKKELQMFSAQRKKEALGRGNIKMLSRAVMHAMCEKCGEKINGGEIAIFVSRAGPGVCWHPSCFVCSTCNELLVDLIYFYQDGKIHCGRHHAELLKPRCSACDEIIFADECTEAEGRHWHMNHFSCYECETVLGGQRYIMKDGRPFCCGCFESHYAEYCESCGEHIGVDHAQMTYDGQHWHATETCFSCAQCKVSLLGCPFLPKKGRIYCSKACSLGEDVHASDSSDSAFQSARSRESRRSVRMGKSSRSADQCRQSLLLSPALNYKFPGMSGNADDTLSRKMDDLSISRQGAGFDNDFWKARDEQETPEDHEEWAEHDDYMTQLLLKFGEKGLFQQAPEDNRSNEHWMSDNIKGKNDLQRNSRNQSLASKKYQSDMYWAQSQDGLGDSAYGSHPGPASSRKLQELDMDHGASGYMHEKMPWYKRSLECLSDNLKPQNENICDSMDSLALSNITGASVDRENKPRPSLFSYQNFQDLNTRDCEKMSNMGTLNSSMLNRSTESLKSLNSEICQEKPPPEEKPMHTSALRRSKSQTRPQVKFSDDVIDNGDCGSIDIRQPPMSERSRRRVYNFEERSQRPHHHRRRKSRKSRSENALHLATESKPSGRERNPRFYTAEDYEKLFHNRSAHEVQAYIQNADLFGQYPNAASNFGLPSQVVDKFLGLYGEDEDSWCSTCSSSSSDSEEEGYFLGQPIPKPLPQRYQYFSDDLCSPTNALSSSQFSQRTTKSKKKKGHKGKNCIIS</sequence>
<protein>
    <recommendedName>
        <fullName>Prickle-like protein 1</fullName>
    </recommendedName>
</protein>
<reference evidence="7" key="1">
    <citation type="submission" date="2006-10" db="EMBL/GenBank/DDBJ databases">
        <authorList>
            <consortium name="Sanger Xenopus tropicalis EST/cDNA project"/>
        </authorList>
    </citation>
    <scope>NUCLEOTIDE SEQUENCE [LARGE SCALE MRNA]</scope>
    <source>
        <tissue evidence="7">Egg</tissue>
    </source>
</reference>
<evidence type="ECO:0000250" key="1"/>
<evidence type="ECO:0000250" key="2">
    <source>
        <dbReference type="UniProtKB" id="Q90Z06"/>
    </source>
</evidence>
<evidence type="ECO:0000255" key="3">
    <source>
        <dbReference type="PROSITE-ProRule" id="PRU00125"/>
    </source>
</evidence>
<evidence type="ECO:0000255" key="4">
    <source>
        <dbReference type="PROSITE-ProRule" id="PRU00636"/>
    </source>
</evidence>
<evidence type="ECO:0000256" key="5">
    <source>
        <dbReference type="SAM" id="MobiDB-lite"/>
    </source>
</evidence>
<evidence type="ECO:0000305" key="6"/>
<evidence type="ECO:0000312" key="7">
    <source>
        <dbReference type="EMBL" id="CAJ81466.1"/>
    </source>
</evidence>
<keyword id="KW-1003">Cell membrane</keyword>
<keyword id="KW-0217">Developmental protein</keyword>
<keyword id="KW-0306">Gastrulation</keyword>
<keyword id="KW-0440">LIM domain</keyword>
<keyword id="KW-0449">Lipoprotein</keyword>
<keyword id="KW-0472">Membrane</keyword>
<keyword id="KW-0479">Metal-binding</keyword>
<keyword id="KW-0488">Methylation</keyword>
<keyword id="KW-0636">Prenylation</keyword>
<keyword id="KW-1185">Reference proteome</keyword>
<keyword id="KW-0677">Repeat</keyword>
<keyword id="KW-0862">Zinc</keyword>